<protein>
    <recommendedName>
        <fullName>Uncharacterized epimerase/dehydratase SAUSA300_0538</fullName>
    </recommendedName>
</protein>
<name>Y538_STAA3</name>
<gene>
    <name type="ordered locus">SAUSA300_0538</name>
</gene>
<sequence length="321" mass="36053">MKKIMITGALGQIGTELVVKCREIYGTDNVLATDIREPEADSPVQNGPFEILDVTDRDRMFELVRDFEADSLMHMAALLSATAEKNPILAWDLNMGGLMNALEAARTYNLHFFTPSSIGAFGDSTPKVNTPQVTIQQPTTMYGVNKVAGELLCQYYFKRFGVDTRSVRFPGLISHVKEPGGGTTDYAVEIYFKAVREGHYTSFIDKGTYMDMMYMDDAIEAIIKLMEADDAKLETRNGYNLSAMSFDPEMVKEAIQEYYPNFTLDYDVDPIRQGIANSWPDSIDTSCSRGEWGFDPKYDLASMTKLMLEAIEQKDTVKNNN</sequence>
<evidence type="ECO:0000305" key="1"/>
<proteinExistence type="inferred from homology"/>
<comment type="similarity">
    <text evidence="1">Belongs to the NAD(P)-dependent epimerase/dehydratase family.</text>
</comment>
<organism>
    <name type="scientific">Staphylococcus aureus (strain USA300)</name>
    <dbReference type="NCBI Taxonomy" id="367830"/>
    <lineage>
        <taxon>Bacteria</taxon>
        <taxon>Bacillati</taxon>
        <taxon>Bacillota</taxon>
        <taxon>Bacilli</taxon>
        <taxon>Bacillales</taxon>
        <taxon>Staphylococcaceae</taxon>
        <taxon>Staphylococcus</taxon>
    </lineage>
</organism>
<accession>Q2FJ87</accession>
<dbReference type="EMBL" id="CP000255">
    <property type="protein sequence ID" value="ABD20398.1"/>
    <property type="molecule type" value="Genomic_DNA"/>
</dbReference>
<dbReference type="RefSeq" id="WP_000723301.1">
    <property type="nucleotide sequence ID" value="NZ_CP027476.1"/>
</dbReference>
<dbReference type="SMR" id="Q2FJ87"/>
<dbReference type="KEGG" id="saa:SAUSA300_0538"/>
<dbReference type="HOGENOM" id="CLU_007383_19_1_9"/>
<dbReference type="OMA" id="HWHASPR"/>
<dbReference type="Proteomes" id="UP000001939">
    <property type="component" value="Chromosome"/>
</dbReference>
<dbReference type="GO" id="GO:0008743">
    <property type="term" value="F:L-threonine 3-dehydrogenase activity"/>
    <property type="evidence" value="ECO:0007669"/>
    <property type="project" value="TreeGrafter"/>
</dbReference>
<dbReference type="GO" id="GO:0006567">
    <property type="term" value="P:threonine catabolic process"/>
    <property type="evidence" value="ECO:0007669"/>
    <property type="project" value="TreeGrafter"/>
</dbReference>
<dbReference type="FunFam" id="3.40.50.720:FF:000077">
    <property type="entry name" value="L-threonine 3-dehydrogenase, mitochondrial"/>
    <property type="match status" value="1"/>
</dbReference>
<dbReference type="Gene3D" id="3.40.50.720">
    <property type="entry name" value="NAD(P)-binding Rossmann-like Domain"/>
    <property type="match status" value="1"/>
</dbReference>
<dbReference type="InterPro" id="IPR001509">
    <property type="entry name" value="Epimerase_deHydtase"/>
</dbReference>
<dbReference type="InterPro" id="IPR036291">
    <property type="entry name" value="NAD(P)-bd_dom_sf"/>
</dbReference>
<dbReference type="InterPro" id="IPR051225">
    <property type="entry name" value="NAD(P)_epim/dehydratase"/>
</dbReference>
<dbReference type="PANTHER" id="PTHR42687">
    <property type="entry name" value="L-THREONINE 3-DEHYDROGENASE"/>
    <property type="match status" value="1"/>
</dbReference>
<dbReference type="PANTHER" id="PTHR42687:SF1">
    <property type="entry name" value="L-THREONINE 3-DEHYDROGENASE, MITOCHONDRIAL"/>
    <property type="match status" value="1"/>
</dbReference>
<dbReference type="Pfam" id="PF01370">
    <property type="entry name" value="Epimerase"/>
    <property type="match status" value="1"/>
</dbReference>
<dbReference type="SUPFAM" id="SSF51735">
    <property type="entry name" value="NAD(P)-binding Rossmann-fold domains"/>
    <property type="match status" value="1"/>
</dbReference>
<feature type="chain" id="PRO_0000270842" description="Uncharacterized epimerase/dehydratase SAUSA300_0538">
    <location>
        <begin position="1"/>
        <end position="321"/>
    </location>
</feature>
<reference key="1">
    <citation type="journal article" date="2006" name="Lancet">
        <title>Complete genome sequence of USA300, an epidemic clone of community-acquired meticillin-resistant Staphylococcus aureus.</title>
        <authorList>
            <person name="Diep B.A."/>
            <person name="Gill S.R."/>
            <person name="Chang R.F."/>
            <person name="Phan T.H."/>
            <person name="Chen J.H."/>
            <person name="Davidson M.G."/>
            <person name="Lin F."/>
            <person name="Lin J."/>
            <person name="Carleton H.A."/>
            <person name="Mongodin E.F."/>
            <person name="Sensabaugh G.F."/>
            <person name="Perdreau-Remington F."/>
        </authorList>
    </citation>
    <scope>NUCLEOTIDE SEQUENCE [LARGE SCALE GENOMIC DNA]</scope>
    <source>
        <strain>USA300</strain>
    </source>
</reference>